<keyword id="KW-0378">Hydrolase</keyword>
<keyword id="KW-0479">Metal-binding</keyword>
<keyword id="KW-1185">Reference proteome</keyword>
<keyword id="KW-0862">Zinc</keyword>
<protein>
    <recommendedName>
        <fullName evidence="1">Hydroxyacylglutathione hydrolase</fullName>
        <ecNumber evidence="1">3.1.2.6</ecNumber>
    </recommendedName>
    <alternativeName>
        <fullName evidence="1">Glyoxalase II</fullName>
        <shortName evidence="1">Glx II</shortName>
    </alternativeName>
</protein>
<organism>
    <name type="scientific">Shigella dysenteriae serotype 1 (strain Sd197)</name>
    <dbReference type="NCBI Taxonomy" id="300267"/>
    <lineage>
        <taxon>Bacteria</taxon>
        <taxon>Pseudomonadati</taxon>
        <taxon>Pseudomonadota</taxon>
        <taxon>Gammaproteobacteria</taxon>
        <taxon>Enterobacterales</taxon>
        <taxon>Enterobacteriaceae</taxon>
        <taxon>Shigella</taxon>
    </lineage>
</organism>
<feature type="chain" id="PRO_0000309706" description="Hydroxyacylglutathione hydrolase">
    <location>
        <begin position="1"/>
        <end position="251"/>
    </location>
</feature>
<feature type="binding site" evidence="1">
    <location>
        <position position="53"/>
    </location>
    <ligand>
        <name>Zn(2+)</name>
        <dbReference type="ChEBI" id="CHEBI:29105"/>
        <label>1</label>
    </ligand>
</feature>
<feature type="binding site" evidence="1">
    <location>
        <position position="55"/>
    </location>
    <ligand>
        <name>Zn(2+)</name>
        <dbReference type="ChEBI" id="CHEBI:29105"/>
        <label>1</label>
    </ligand>
</feature>
<feature type="binding site" evidence="1">
    <location>
        <position position="57"/>
    </location>
    <ligand>
        <name>Zn(2+)</name>
        <dbReference type="ChEBI" id="CHEBI:29105"/>
        <label>2</label>
    </ligand>
</feature>
<feature type="binding site" evidence="1">
    <location>
        <position position="58"/>
    </location>
    <ligand>
        <name>Zn(2+)</name>
        <dbReference type="ChEBI" id="CHEBI:29105"/>
        <label>2</label>
    </ligand>
</feature>
<feature type="binding site" evidence="1">
    <location>
        <position position="110"/>
    </location>
    <ligand>
        <name>Zn(2+)</name>
        <dbReference type="ChEBI" id="CHEBI:29105"/>
        <label>1</label>
    </ligand>
</feature>
<feature type="binding site" evidence="1">
    <location>
        <position position="127"/>
    </location>
    <ligand>
        <name>Zn(2+)</name>
        <dbReference type="ChEBI" id="CHEBI:29105"/>
        <label>1</label>
    </ligand>
</feature>
<feature type="binding site" evidence="1">
    <location>
        <position position="127"/>
    </location>
    <ligand>
        <name>Zn(2+)</name>
        <dbReference type="ChEBI" id="CHEBI:29105"/>
        <label>2</label>
    </ligand>
</feature>
<feature type="binding site" evidence="1">
    <location>
        <position position="165"/>
    </location>
    <ligand>
        <name>Zn(2+)</name>
        <dbReference type="ChEBI" id="CHEBI:29105"/>
        <label>2</label>
    </ligand>
</feature>
<accession>Q32JQ1</accession>
<comment type="function">
    <text evidence="1">Thiolesterase that catalyzes the hydrolysis of S-D-lactoyl-glutathione to form glutathione and D-lactic acid.</text>
</comment>
<comment type="catalytic activity">
    <reaction evidence="1">
        <text>an S-(2-hydroxyacyl)glutathione + H2O = a 2-hydroxy carboxylate + glutathione + H(+)</text>
        <dbReference type="Rhea" id="RHEA:21864"/>
        <dbReference type="ChEBI" id="CHEBI:15377"/>
        <dbReference type="ChEBI" id="CHEBI:15378"/>
        <dbReference type="ChEBI" id="CHEBI:57925"/>
        <dbReference type="ChEBI" id="CHEBI:58896"/>
        <dbReference type="ChEBI" id="CHEBI:71261"/>
        <dbReference type="EC" id="3.1.2.6"/>
    </reaction>
</comment>
<comment type="cofactor">
    <cofactor evidence="1">
        <name>Zn(2+)</name>
        <dbReference type="ChEBI" id="CHEBI:29105"/>
    </cofactor>
    <text evidence="1">Binds 2 Zn(2+) ions per subunit.</text>
</comment>
<comment type="pathway">
    <text evidence="1">Secondary metabolite metabolism; methylglyoxal degradation; (R)-lactate from methylglyoxal: step 2/2.</text>
</comment>
<comment type="subunit">
    <text evidence="1">Monomer.</text>
</comment>
<comment type="similarity">
    <text evidence="1">Belongs to the metallo-beta-lactamase superfamily. Glyoxalase II family.</text>
</comment>
<sequence length="251" mass="28458">MNLNSIPAFDDNYIWVLNDEAGRCLIVDPGDAEPVLNAIAANNWQPEAIFLTHHHHDHVGGVKELVEKFPQIVVYGPQETQDKGTTQVVKDGETAFVLGHEFSVIATPGHTLGHICYFSKPYLFCGDTLFSGGCGRLFEGTASQMYQSLKKLSALPDDTLVCCAHEYTLSNMEFALSILPHDLSINDYYRKVKELRAKNQITQPVILKNERQINVFLRTEHIDLINVINEETLLQQPDERFAWLRSKKDRF</sequence>
<reference key="1">
    <citation type="journal article" date="2005" name="Nucleic Acids Res.">
        <title>Genome dynamics and diversity of Shigella species, the etiologic agents of bacillary dysentery.</title>
        <authorList>
            <person name="Yang F."/>
            <person name="Yang J."/>
            <person name="Zhang X."/>
            <person name="Chen L."/>
            <person name="Jiang Y."/>
            <person name="Yan Y."/>
            <person name="Tang X."/>
            <person name="Wang J."/>
            <person name="Xiong Z."/>
            <person name="Dong J."/>
            <person name="Xue Y."/>
            <person name="Zhu Y."/>
            <person name="Xu X."/>
            <person name="Sun L."/>
            <person name="Chen S."/>
            <person name="Nie H."/>
            <person name="Peng J."/>
            <person name="Xu J."/>
            <person name="Wang Y."/>
            <person name="Yuan Z."/>
            <person name="Wen Y."/>
            <person name="Yao Z."/>
            <person name="Shen Y."/>
            <person name="Qiang B."/>
            <person name="Hou Y."/>
            <person name="Yu J."/>
            <person name="Jin Q."/>
        </authorList>
    </citation>
    <scope>NUCLEOTIDE SEQUENCE [LARGE SCALE GENOMIC DNA]</scope>
    <source>
        <strain>Sd197</strain>
    </source>
</reference>
<name>GLO2_SHIDS</name>
<proteinExistence type="inferred from homology"/>
<dbReference type="EC" id="3.1.2.6" evidence="1"/>
<dbReference type="EMBL" id="CP000034">
    <property type="protein sequence ID" value="ABB60456.1"/>
    <property type="molecule type" value="Genomic_DNA"/>
</dbReference>
<dbReference type="RefSeq" id="WP_001052711.1">
    <property type="nucleotide sequence ID" value="NC_007606.1"/>
</dbReference>
<dbReference type="RefSeq" id="YP_401945.1">
    <property type="nucleotide sequence ID" value="NC_007606.1"/>
</dbReference>
<dbReference type="SMR" id="Q32JQ1"/>
<dbReference type="STRING" id="300267.SDY_0231"/>
<dbReference type="EnsemblBacteria" id="ABB60456">
    <property type="protein sequence ID" value="ABB60456"/>
    <property type="gene ID" value="SDY_0231"/>
</dbReference>
<dbReference type="KEGG" id="sdy:SDY_0231"/>
<dbReference type="PATRIC" id="fig|300267.13.peg.260"/>
<dbReference type="HOGENOM" id="CLU_030571_4_1_6"/>
<dbReference type="UniPathway" id="UPA00619">
    <property type="reaction ID" value="UER00676"/>
</dbReference>
<dbReference type="Proteomes" id="UP000002716">
    <property type="component" value="Chromosome"/>
</dbReference>
<dbReference type="GO" id="GO:0004416">
    <property type="term" value="F:hydroxyacylglutathione hydrolase activity"/>
    <property type="evidence" value="ECO:0007669"/>
    <property type="project" value="UniProtKB-UniRule"/>
</dbReference>
<dbReference type="GO" id="GO:0046872">
    <property type="term" value="F:metal ion binding"/>
    <property type="evidence" value="ECO:0007669"/>
    <property type="project" value="UniProtKB-KW"/>
</dbReference>
<dbReference type="GO" id="GO:0019243">
    <property type="term" value="P:methylglyoxal catabolic process to D-lactate via S-lactoyl-glutathione"/>
    <property type="evidence" value="ECO:0007669"/>
    <property type="project" value="InterPro"/>
</dbReference>
<dbReference type="CDD" id="cd07723">
    <property type="entry name" value="hydroxyacylglutathione_hydrolase_MBL-fold"/>
    <property type="match status" value="1"/>
</dbReference>
<dbReference type="FunFam" id="3.60.15.10:FF:000012">
    <property type="entry name" value="Hydroxyacylglutathione hydrolase"/>
    <property type="match status" value="1"/>
</dbReference>
<dbReference type="Gene3D" id="3.60.15.10">
    <property type="entry name" value="Ribonuclease Z/Hydroxyacylglutathione hydrolase-like"/>
    <property type="match status" value="1"/>
</dbReference>
<dbReference type="HAMAP" id="MF_01374">
    <property type="entry name" value="Glyoxalase_2"/>
    <property type="match status" value="1"/>
</dbReference>
<dbReference type="InterPro" id="IPR035680">
    <property type="entry name" value="Clx_II_MBL"/>
</dbReference>
<dbReference type="InterPro" id="IPR050110">
    <property type="entry name" value="Glyoxalase_II_hydrolase"/>
</dbReference>
<dbReference type="InterPro" id="IPR032282">
    <property type="entry name" value="HAGH_C"/>
</dbReference>
<dbReference type="InterPro" id="IPR017782">
    <property type="entry name" value="Hydroxyacylglutathione_Hdrlase"/>
</dbReference>
<dbReference type="InterPro" id="IPR001279">
    <property type="entry name" value="Metallo-B-lactamas"/>
</dbReference>
<dbReference type="InterPro" id="IPR036866">
    <property type="entry name" value="RibonucZ/Hydroxyglut_hydro"/>
</dbReference>
<dbReference type="NCBIfam" id="TIGR03413">
    <property type="entry name" value="GSH_gloB"/>
    <property type="match status" value="1"/>
</dbReference>
<dbReference type="NCBIfam" id="NF007597">
    <property type="entry name" value="PRK10241.1"/>
    <property type="match status" value="1"/>
</dbReference>
<dbReference type="PANTHER" id="PTHR43705">
    <property type="entry name" value="HYDROXYACYLGLUTATHIONE HYDROLASE"/>
    <property type="match status" value="1"/>
</dbReference>
<dbReference type="PANTHER" id="PTHR43705:SF1">
    <property type="entry name" value="HYDROXYACYLGLUTATHIONE HYDROLASE GLOB"/>
    <property type="match status" value="1"/>
</dbReference>
<dbReference type="Pfam" id="PF16123">
    <property type="entry name" value="HAGH_C"/>
    <property type="match status" value="1"/>
</dbReference>
<dbReference type="Pfam" id="PF00753">
    <property type="entry name" value="Lactamase_B"/>
    <property type="match status" value="1"/>
</dbReference>
<dbReference type="PIRSF" id="PIRSF005457">
    <property type="entry name" value="Glx"/>
    <property type="match status" value="1"/>
</dbReference>
<dbReference type="SMART" id="SM00849">
    <property type="entry name" value="Lactamase_B"/>
    <property type="match status" value="1"/>
</dbReference>
<dbReference type="SUPFAM" id="SSF56281">
    <property type="entry name" value="Metallo-hydrolase/oxidoreductase"/>
    <property type="match status" value="1"/>
</dbReference>
<gene>
    <name evidence="1" type="primary">gloB</name>
    <name type="ordered locus">SDY_0231</name>
</gene>
<evidence type="ECO:0000255" key="1">
    <source>
        <dbReference type="HAMAP-Rule" id="MF_01374"/>
    </source>
</evidence>